<keyword id="KW-0010">Activator</keyword>
<keyword id="KW-0046">Antibiotic resistance</keyword>
<keyword id="KW-0238">DNA-binding</keyword>
<keyword id="KW-1185">Reference proteome</keyword>
<keyword id="KW-0677">Repeat</keyword>
<keyword id="KW-0678">Repressor</keyword>
<keyword id="KW-0804">Transcription</keyword>
<keyword id="KW-0805">Transcription regulation</keyword>
<dbReference type="EMBL" id="U54468">
    <property type="protein sequence ID" value="AAC44977.1"/>
    <property type="status" value="ALT_INIT"/>
    <property type="molecule type" value="Genomic_DNA"/>
</dbReference>
<dbReference type="EMBL" id="AE006468">
    <property type="protein sequence ID" value="AAL20438.1"/>
    <property type="status" value="ALT_INIT"/>
    <property type="molecule type" value="Genomic_DNA"/>
</dbReference>
<dbReference type="PIR" id="T11757">
    <property type="entry name" value="T11757"/>
</dbReference>
<dbReference type="RefSeq" id="NP_460479.4">
    <property type="nucleotide sequence ID" value="NC_003197.2"/>
</dbReference>
<dbReference type="SMR" id="P0A2S4"/>
<dbReference type="STRING" id="99287.STM1519"/>
<dbReference type="PaxDb" id="99287-STM1519"/>
<dbReference type="GeneID" id="1253037"/>
<dbReference type="KEGG" id="stm:STM1519"/>
<dbReference type="PATRIC" id="fig|99287.12.peg.1607"/>
<dbReference type="HOGENOM" id="CLU_000445_81_14_6"/>
<dbReference type="OMA" id="KFHENIG"/>
<dbReference type="PhylomeDB" id="P0A2S4"/>
<dbReference type="Proteomes" id="UP000001014">
    <property type="component" value="Chromosome"/>
</dbReference>
<dbReference type="GO" id="GO:0005829">
    <property type="term" value="C:cytosol"/>
    <property type="evidence" value="ECO:0000318"/>
    <property type="project" value="GO_Central"/>
</dbReference>
<dbReference type="GO" id="GO:0001108">
    <property type="term" value="F:bacterial-type RNA polymerase holo enzyme binding"/>
    <property type="evidence" value="ECO:0000318"/>
    <property type="project" value="GO_Central"/>
</dbReference>
<dbReference type="GO" id="GO:0003700">
    <property type="term" value="F:DNA-binding transcription factor activity"/>
    <property type="evidence" value="ECO:0007669"/>
    <property type="project" value="InterPro"/>
</dbReference>
<dbReference type="GO" id="GO:0043565">
    <property type="term" value="F:sequence-specific DNA binding"/>
    <property type="evidence" value="ECO:0000318"/>
    <property type="project" value="GO_Central"/>
</dbReference>
<dbReference type="GO" id="GO:0006355">
    <property type="term" value="P:regulation of DNA-templated transcription"/>
    <property type="evidence" value="ECO:0000318"/>
    <property type="project" value="GO_Central"/>
</dbReference>
<dbReference type="GO" id="GO:0046677">
    <property type="term" value="P:response to antibiotic"/>
    <property type="evidence" value="ECO:0007669"/>
    <property type="project" value="UniProtKB-KW"/>
</dbReference>
<dbReference type="FunFam" id="1.10.10.60:FF:000013">
    <property type="entry name" value="DNA-binding transcriptional activator MarA"/>
    <property type="match status" value="1"/>
</dbReference>
<dbReference type="Gene3D" id="1.10.10.60">
    <property type="entry name" value="Homeodomain-like"/>
    <property type="match status" value="2"/>
</dbReference>
<dbReference type="InterPro" id="IPR009057">
    <property type="entry name" value="Homeodomain-like_sf"/>
</dbReference>
<dbReference type="InterPro" id="IPR018060">
    <property type="entry name" value="HTH_AraC"/>
</dbReference>
<dbReference type="InterPro" id="IPR018062">
    <property type="entry name" value="HTH_AraC-typ_CS"/>
</dbReference>
<dbReference type="InterPro" id="IPR050959">
    <property type="entry name" value="MarA-like"/>
</dbReference>
<dbReference type="NCBIfam" id="NF012198">
    <property type="entry name" value="MarA_TF"/>
    <property type="match status" value="1"/>
</dbReference>
<dbReference type="NCBIfam" id="NF008564">
    <property type="entry name" value="PRK11511.1"/>
    <property type="match status" value="1"/>
</dbReference>
<dbReference type="PANTHER" id="PTHR47504:SF4">
    <property type="entry name" value="MULTIPLE ANTIBIOTIC RESISTANCE PROTEIN MARA"/>
    <property type="match status" value="1"/>
</dbReference>
<dbReference type="PANTHER" id="PTHR47504">
    <property type="entry name" value="RIGHT ORIGIN-BINDING PROTEIN"/>
    <property type="match status" value="1"/>
</dbReference>
<dbReference type="Pfam" id="PF12833">
    <property type="entry name" value="HTH_18"/>
    <property type="match status" value="1"/>
</dbReference>
<dbReference type="SMART" id="SM00342">
    <property type="entry name" value="HTH_ARAC"/>
    <property type="match status" value="1"/>
</dbReference>
<dbReference type="SUPFAM" id="SSF46689">
    <property type="entry name" value="Homeodomain-like"/>
    <property type="match status" value="2"/>
</dbReference>
<dbReference type="PROSITE" id="PS00041">
    <property type="entry name" value="HTH_ARAC_FAMILY_1"/>
    <property type="match status" value="1"/>
</dbReference>
<dbReference type="PROSITE" id="PS01124">
    <property type="entry name" value="HTH_ARAC_FAMILY_2"/>
    <property type="match status" value="1"/>
</dbReference>
<name>MARA_SALTY</name>
<feature type="chain" id="PRO_0000194535" description="Multiple antibiotic resistance protein MarA">
    <location>
        <begin position="1"/>
        <end position="127"/>
    </location>
</feature>
<feature type="domain" description="HTH araC/xylS-type" evidence="2">
    <location>
        <begin position="12"/>
        <end position="110"/>
    </location>
</feature>
<feature type="DNA-binding region" description="H-T-H motif" evidence="2">
    <location>
        <begin position="29"/>
        <end position="50"/>
    </location>
</feature>
<feature type="DNA-binding region" description="H-T-H motif" evidence="2">
    <location>
        <begin position="77"/>
        <end position="100"/>
    </location>
</feature>
<sequence length="127" mass="15155">MSRRNTDAITIHSILDWIEDNLESPLSLEKVSERSGYSKWHLQRMFKKETGHSLGQYIRSRKMTEIAQKLKESNEPILYLAERYGFESQQTLTRTFKNYFDVPPHKYRITNMHGESRYMLPLNHGNY</sequence>
<proteinExistence type="evidence at transcript level"/>
<evidence type="ECO:0000250" key="1">
    <source>
        <dbReference type="UniProtKB" id="P0ACH5"/>
    </source>
</evidence>
<evidence type="ECO:0000255" key="2">
    <source>
        <dbReference type="PROSITE-ProRule" id="PRU00593"/>
    </source>
</evidence>
<evidence type="ECO:0000269" key="3">
    <source>
    </source>
</evidence>
<evidence type="ECO:0000269" key="4">
    <source>
    </source>
</evidence>
<evidence type="ECO:0000305" key="5"/>
<organism>
    <name type="scientific">Salmonella typhimurium (strain LT2 / SGSC1412 / ATCC 700720)</name>
    <dbReference type="NCBI Taxonomy" id="99287"/>
    <lineage>
        <taxon>Bacteria</taxon>
        <taxon>Pseudomonadati</taxon>
        <taxon>Pseudomonadota</taxon>
        <taxon>Gammaproteobacteria</taxon>
        <taxon>Enterobacterales</taxon>
        <taxon>Enterobacteriaceae</taxon>
        <taxon>Salmonella</taxon>
    </lineage>
</organism>
<accession>P0A2S4</accession>
<accession>Q56070</accession>
<protein>
    <recommendedName>
        <fullName>Multiple antibiotic resistance protein MarA</fullName>
    </recommendedName>
</protein>
<reference key="1">
    <citation type="journal article" date="1997" name="J. Bacteriol.">
        <title>The Salmonella typhimurium mar locus: molecular and genetic analyses and assessment of its role in virulence.</title>
        <authorList>
            <person name="Sulavik M.C."/>
            <person name="Dazer M."/>
            <person name="Miller P.F."/>
        </authorList>
    </citation>
    <scope>NUCLEOTIDE SEQUENCE [GENOMIC DNA]</scope>
    <source>
        <strain>X3181</strain>
    </source>
</reference>
<reference key="2">
    <citation type="journal article" date="2001" name="Nature">
        <title>Complete genome sequence of Salmonella enterica serovar Typhimurium LT2.</title>
        <authorList>
            <person name="McClelland M."/>
            <person name="Sanderson K.E."/>
            <person name="Spieth J."/>
            <person name="Clifton S.W."/>
            <person name="Latreille P."/>
            <person name="Courtney L."/>
            <person name="Porwollik S."/>
            <person name="Ali J."/>
            <person name="Dante M."/>
            <person name="Du F."/>
            <person name="Hou S."/>
            <person name="Layman D."/>
            <person name="Leonard S."/>
            <person name="Nguyen C."/>
            <person name="Scott K."/>
            <person name="Holmes A."/>
            <person name="Grewal N."/>
            <person name="Mulvaney E."/>
            <person name="Ryan E."/>
            <person name="Sun H."/>
            <person name="Florea L."/>
            <person name="Miller W."/>
            <person name="Stoneking T."/>
            <person name="Nhan M."/>
            <person name="Waterston R."/>
            <person name="Wilson R.K."/>
        </authorList>
    </citation>
    <scope>NUCLEOTIDE SEQUENCE [LARGE SCALE GENOMIC DNA]</scope>
    <source>
        <strain>LT2 / SGSC1412 / ATCC 700720</strain>
    </source>
</reference>
<reference key="3">
    <citation type="journal article" date="2019" name="J. Bacteriol.">
        <title>Multidrug Resistance Regulators MarA, SoxS, Rob, and RamA Repress Flagellar Gene Expression and Motility in Salmonella enterica Serovar Typhimurium.</title>
        <authorList>
            <person name="Thota S.S."/>
            <person name="Chubiz L.M."/>
        </authorList>
    </citation>
    <scope>FUNCTION</scope>
    <scope>INDUCTION BY SALICYLIC ACID</scope>
</reference>
<gene>
    <name type="primary">marA</name>
    <name type="ordered locus">STM1519</name>
</gene>
<comment type="function">
    <text evidence="3 4">Transcriptional regulator (PubMed:31501286). Represses transcription of genes belonging to the flagellar regulon, including flhD, flhB and fliC; probably thereby leading to repression of motility (PubMed:31501286). Binds to regulatory regions of target genes, including the promoter of the flhDC operon (PubMed:31501286). Represses expression of the flhDC operon in a post-transcriptional manner (PubMed:31501286). May activate genes involved in the multiple antibiotic resistance (Mar) phenotype (PubMed:9068629).</text>
</comment>
<comment type="subunit">
    <text evidence="1">Monomer.</text>
</comment>
<comment type="induction">
    <text evidence="3">Induced by salicylic acid, which leads to significant reduction in the expression of flagellar genes, including fliC.</text>
</comment>
<comment type="sequence caution" evidence="5">
    <conflict type="erroneous initiation">
        <sequence resource="EMBL-CDS" id="AAC44977"/>
    </conflict>
</comment>
<comment type="sequence caution" evidence="5">
    <conflict type="erroneous initiation">
        <sequence resource="EMBL-CDS" id="AAL20438"/>
    </conflict>
</comment>